<dbReference type="EC" id="1.3.7.5" evidence="1"/>
<dbReference type="EMBL" id="CP000825">
    <property type="protein sequence ID" value="ABV50456.1"/>
    <property type="molecule type" value="Genomic_DNA"/>
</dbReference>
<dbReference type="RefSeq" id="WP_012007559.1">
    <property type="nucleotide sequence ID" value="NC_009840.1"/>
</dbReference>
<dbReference type="SMR" id="A8G4C5"/>
<dbReference type="STRING" id="93060.P9215_08411"/>
<dbReference type="KEGG" id="pmh:P9215_08411"/>
<dbReference type="eggNOG" id="ENOG502Z7RN">
    <property type="taxonomic scope" value="Bacteria"/>
</dbReference>
<dbReference type="HOGENOM" id="CLU_074224_0_0_3"/>
<dbReference type="OrthoDB" id="581340at2"/>
<dbReference type="Proteomes" id="UP000002014">
    <property type="component" value="Chromosome"/>
</dbReference>
<dbReference type="GO" id="GO:0050897">
    <property type="term" value="F:cobalt ion binding"/>
    <property type="evidence" value="ECO:0007669"/>
    <property type="project" value="InterPro"/>
</dbReference>
<dbReference type="GO" id="GO:0050620">
    <property type="term" value="F:phycocyanobilin:ferredoxin oxidoreductase activity"/>
    <property type="evidence" value="ECO:0007669"/>
    <property type="project" value="UniProtKB-UniRule"/>
</dbReference>
<dbReference type="GO" id="GO:0010024">
    <property type="term" value="P:phytochromobilin biosynthetic process"/>
    <property type="evidence" value="ECO:0007669"/>
    <property type="project" value="InterPro"/>
</dbReference>
<dbReference type="Gene3D" id="3.40.1500.20">
    <property type="match status" value="1"/>
</dbReference>
<dbReference type="HAMAP" id="MF_00618">
    <property type="entry name" value="Ferredoxin_bilin_red"/>
    <property type="match status" value="1"/>
</dbReference>
<dbReference type="InterPro" id="IPR009249">
    <property type="entry name" value="Ferredoxin-dep_bilin_Rdtase"/>
</dbReference>
<dbReference type="InterPro" id="IPR022870">
    <property type="entry name" value="Ferredoxin_bilin_OxRdtase"/>
</dbReference>
<dbReference type="NCBIfam" id="NF002760">
    <property type="entry name" value="PRK02816.1"/>
    <property type="match status" value="1"/>
</dbReference>
<dbReference type="PANTHER" id="PTHR34557">
    <property type="entry name" value="PHYTOCHROMOBILIN:FERREDOXIN OXIDOREDUCTASE, CHLOROPLASTIC"/>
    <property type="match status" value="1"/>
</dbReference>
<dbReference type="PANTHER" id="PTHR34557:SF1">
    <property type="entry name" value="PHYTOCHROMOBILIN:FERREDOXIN OXIDOREDUCTASE, CHLOROPLASTIC"/>
    <property type="match status" value="1"/>
</dbReference>
<dbReference type="Pfam" id="PF05996">
    <property type="entry name" value="Fe_bilin_red"/>
    <property type="match status" value="1"/>
</dbReference>
<name>PCYA_PROM2</name>
<comment type="function">
    <text evidence="1">Catalyzes the four-electron reduction of biliverdin IX-alpha (2-electron reduction at both the A and D rings); the reaction proceeds via an isolatable 2-electron intermediate, 181,182-dihydrobiliverdin.</text>
</comment>
<comment type="catalytic activity">
    <reaction evidence="1">
        <text>(2R,3Z)-phycocyanobilin + 4 oxidized [2Fe-2S]-[ferredoxin] = biliverdin IXalpha + 4 reduced [2Fe-2S]-[ferredoxin] + 4 H(+)</text>
        <dbReference type="Rhea" id="RHEA:15309"/>
        <dbReference type="Rhea" id="RHEA-COMP:10000"/>
        <dbReference type="Rhea" id="RHEA-COMP:10001"/>
        <dbReference type="ChEBI" id="CHEBI:15378"/>
        <dbReference type="ChEBI" id="CHEBI:33737"/>
        <dbReference type="ChEBI" id="CHEBI:33738"/>
        <dbReference type="ChEBI" id="CHEBI:57437"/>
        <dbReference type="ChEBI" id="CHEBI:57991"/>
        <dbReference type="EC" id="1.3.7.5"/>
    </reaction>
</comment>
<comment type="similarity">
    <text evidence="1">Belongs to the HY2 family.</text>
</comment>
<protein>
    <recommendedName>
        <fullName evidence="1">Phycocyanobilin:ferredoxin oxidoreductase</fullName>
        <ecNumber evidence="1">1.3.7.5</ecNumber>
    </recommendedName>
</protein>
<accession>A8G4C5</accession>
<reference key="1">
    <citation type="journal article" date="2007" name="PLoS Genet.">
        <title>Patterns and implications of gene gain and loss in the evolution of Prochlorococcus.</title>
        <authorList>
            <person name="Kettler G.C."/>
            <person name="Martiny A.C."/>
            <person name="Huang K."/>
            <person name="Zucker J."/>
            <person name="Coleman M.L."/>
            <person name="Rodrigue S."/>
            <person name="Chen F."/>
            <person name="Lapidus A."/>
            <person name="Ferriera S."/>
            <person name="Johnson J."/>
            <person name="Steglich C."/>
            <person name="Church G.M."/>
            <person name="Richardson P."/>
            <person name="Chisholm S.W."/>
        </authorList>
    </citation>
    <scope>NUCLEOTIDE SEQUENCE [LARGE SCALE GENOMIC DNA]</scope>
    <source>
        <strain>MIT 9215</strain>
    </source>
</reference>
<gene>
    <name evidence="1" type="primary">pcyA</name>
    <name type="ordered locus">P9215_08411</name>
</gene>
<organism>
    <name type="scientific">Prochlorococcus marinus (strain MIT 9215)</name>
    <dbReference type="NCBI Taxonomy" id="93060"/>
    <lineage>
        <taxon>Bacteria</taxon>
        <taxon>Bacillati</taxon>
        <taxon>Cyanobacteriota</taxon>
        <taxon>Cyanophyceae</taxon>
        <taxon>Synechococcales</taxon>
        <taxon>Prochlorococcaceae</taxon>
        <taxon>Prochlorococcus</taxon>
    </lineage>
</organism>
<evidence type="ECO:0000255" key="1">
    <source>
        <dbReference type="HAMAP-Rule" id="MF_00618"/>
    </source>
</evidence>
<sequence>MLSESLTKTKLTDPLILDLLQNIREHRSMLEDLVSIKIDPNLTNIISNEIGRELYIENEFHKAKGFRKLHIEVAEFSKNLRILHCVFFPDPKFDIPIFGMDLVKINDIVSAAIVDLSPASQNQGLKYEKLLSQVDKSSFSSLREIPKWGGIFSNNVFFASLKRNSEKNDFCRVVDQYLSILIKLSNKAKAEVDKEIIQERIDFQKNYCVQQMKNEKTSMVLLKYFDEKWVNNYIKTVLFDF</sequence>
<keyword id="KW-0560">Oxidoreductase</keyword>
<proteinExistence type="inferred from homology"/>
<feature type="chain" id="PRO_1000190495" description="Phycocyanobilin:ferredoxin oxidoreductase">
    <location>
        <begin position="1"/>
        <end position="241"/>
    </location>
</feature>